<keyword id="KW-0040">ANK repeat</keyword>
<keyword id="KW-0256">Endoplasmic reticulum</keyword>
<keyword id="KW-0325">Glycoprotein</keyword>
<keyword id="KW-0407">Ion channel</keyword>
<keyword id="KW-0406">Ion transport</keyword>
<keyword id="KW-0472">Membrane</keyword>
<keyword id="KW-0630">Potassium</keyword>
<keyword id="KW-0631">Potassium channel</keyword>
<keyword id="KW-0633">Potassium transport</keyword>
<keyword id="KW-1185">Reference proteome</keyword>
<keyword id="KW-0677">Repeat</keyword>
<keyword id="KW-0812">Transmembrane</keyword>
<keyword id="KW-1133">Transmembrane helix</keyword>
<keyword id="KW-0813">Transport</keyword>
<keyword id="KW-0851">Voltage-gated channel</keyword>
<organism>
    <name type="scientific">Arabidopsis thaliana</name>
    <name type="common">Mouse-ear cress</name>
    <dbReference type="NCBI Taxonomy" id="3702"/>
    <lineage>
        <taxon>Eukaryota</taxon>
        <taxon>Viridiplantae</taxon>
        <taxon>Streptophyta</taxon>
        <taxon>Embryophyta</taxon>
        <taxon>Tracheophyta</taxon>
        <taxon>Spermatophyta</taxon>
        <taxon>Magnoliopsida</taxon>
        <taxon>eudicotyledons</taxon>
        <taxon>Gunneridae</taxon>
        <taxon>Pentapetalae</taxon>
        <taxon>rosids</taxon>
        <taxon>malvids</taxon>
        <taxon>Brassicales</taxon>
        <taxon>Brassicaceae</taxon>
        <taxon>Camelineae</taxon>
        <taxon>Arabidopsis</taxon>
    </lineage>
</organism>
<evidence type="ECO:0000255" key="1"/>
<evidence type="ECO:0000255" key="2">
    <source>
        <dbReference type="PROSITE-ProRule" id="PRU00823"/>
    </source>
</evidence>
<evidence type="ECO:0000269" key="3">
    <source>
    </source>
</evidence>
<evidence type="ECO:0000269" key="4">
    <source>
    </source>
</evidence>
<evidence type="ECO:0000269" key="5">
    <source>
    </source>
</evidence>
<evidence type="ECO:0000269" key="6">
    <source>
    </source>
</evidence>
<evidence type="ECO:0000269" key="7">
    <source>
    </source>
</evidence>
<evidence type="ECO:0000269" key="8">
    <source>
    </source>
</evidence>
<evidence type="ECO:0000269" key="9">
    <source>
    </source>
</evidence>
<evidence type="ECO:0000269" key="10">
    <source>
    </source>
</evidence>
<evidence type="ECO:0000269" key="11">
    <source>
    </source>
</evidence>
<evidence type="ECO:0000269" key="12">
    <source>
    </source>
</evidence>
<evidence type="ECO:0000269" key="13">
    <source>
    </source>
</evidence>
<evidence type="ECO:0000305" key="14"/>
<protein>
    <recommendedName>
        <fullName>Potassium channel AKT2/3</fullName>
    </recommendedName>
</protein>
<comment type="function">
    <text evidence="8 9">Highly selective and weak inward-rectifying potassium channel. Plays a role in both loading and unloading potassium into/from the phloem sap. Seems to control sugar loading into phloem via a voltage-dependent process. Blocked by physiological concentrations of external calcium and by external acidification. May interact with the cytoskeleton or with regulatory proteins. Dephosphorylation by PP2CA not only leads to the inhibition of potassium currents but also to an increase of the voltage-dependence of the channel. Regulated by the CBL4/CIPK6 calcium sensor/protein kinase complex via a kinase interaction-dependent but phosphorylation-independent translocation of the channel to the plasma membrane.</text>
</comment>
<comment type="subunit">
    <text evidence="5 6 9 10 11 13">The potassium channel is probably composed of a homo- or heterotetrameric complex of pore-forming subunits. Interacts with the phosphatase PPC2A and the kinase CIPK6. May interact with AKT1, KAT1 and KAT3. Interacts with SLAC1 (PubMed:27002025).</text>
</comment>
<comment type="interaction">
    <interactant intactId="EBI-1552774">
        <id>Q38898</id>
    </interactant>
    <interactant intactId="EBI-974289">
        <id>Q38998</id>
        <label>AKT1</label>
    </interactant>
    <organismsDiffer>false</organismsDiffer>
    <experiments>3</experiments>
</comment>
<comment type="interaction">
    <interactant intactId="EBI-1552774">
        <id>Q38898</id>
    </interactant>
    <interactant intactId="EBI-1552774">
        <id>Q38898</id>
        <label>AKT2</label>
    </interactant>
    <organismsDiffer>false</organismsDiffer>
    <experiments>3</experiments>
</comment>
<comment type="interaction">
    <interactant intactId="EBI-1552774">
        <id>Q38898</id>
    </interactant>
    <interactant intactId="EBI-1552490">
        <id>Q39128</id>
        <label>KAT1</label>
    </interactant>
    <organismsDiffer>false</organismsDiffer>
    <experiments>4</experiments>
</comment>
<comment type="interaction">
    <interactant intactId="EBI-1552774">
        <id>Q38898</id>
    </interactant>
    <interactant intactId="EBI-2117720">
        <id>Q38849</id>
        <label>KAT2</label>
    </interactant>
    <organismsDiffer>false</organismsDiffer>
    <experiments>3</experiments>
</comment>
<comment type="interaction">
    <interactant intactId="EBI-1552774">
        <id>Q38898</id>
    </interactant>
    <interactant intactId="EBI-1764934">
        <id>P49598</id>
        <label>PP2CA</label>
    </interactant>
    <organismsDiffer>false</organismsDiffer>
    <experiments>5</experiments>
</comment>
<comment type="subcellular location">
    <subcellularLocation>
        <location evidence="10">Endoplasmic reticulum membrane</location>
        <topology evidence="10">Multi-pass membrane protein</topology>
    </subcellularLocation>
    <text>Targeted to the cell membrane when interacting with CIPK6 and CBL4.</text>
</comment>
<comment type="tissue specificity">
    <text evidence="3 4 6 12">Expressed mainly in the phloem tissues throughout the plant but also, at a lower level, in leaf epiderm, mesophyll and guard cells.</text>
</comment>
<comment type="induction">
    <text evidence="9">In shoots, strongly induced by abscisic acid (ABA) treatment and reduced after NaCl treatment or potassium starvation.</text>
</comment>
<comment type="domain">
    <text>The segment S4 is probably the voltage-sensor and is characterized by a series of positively charged amino acids. The pore-forming region H5 is enclosed by the transmembrane segments S5 and S6 in the Shaker-type (1P/6TM) and contains the GYGD signature motif which seems to be involved in potassium selectivity.</text>
</comment>
<comment type="domain">
    <text>The KHA domain (rich in hydrophobic and acidic residues) present in the C-terminal part is likely to be important for tetramerization.</text>
</comment>
<comment type="PTM">
    <text>Dephosphorylated by PP2CA.</text>
</comment>
<comment type="disruption phenotype">
    <text evidence="10">Delayed development and flowering.</text>
</comment>
<comment type="similarity">
    <text evidence="14">Belongs to the potassium channel family. Plant (TC 1.A.1.4) subfamily.</text>
</comment>
<comment type="sequence caution" evidence="14">
    <conflict type="erroneous initiation">
        <sequence resource="EMBL-CDS" id="AAA96153"/>
    </conflict>
    <text>Truncated N-terminus.</text>
</comment>
<comment type="sequence caution" evidence="14">
    <conflict type="erroneous initiation">
        <sequence resource="EMBL-CDS" id="AAA96154"/>
    </conflict>
    <text>Truncated N-terminus.</text>
</comment>
<comment type="sequence caution" evidence="14">
    <conflict type="erroneous initiation">
        <sequence resource="EMBL-CDS" id="CAA16770"/>
    </conflict>
    <text>Truncated N-terminus.</text>
</comment>
<comment type="sequence caution" evidence="14">
    <conflict type="erroneous initiation">
        <sequence resource="EMBL-CDS" id="CAB79175"/>
    </conflict>
    <text>Truncated N-terminus.</text>
</comment>
<gene>
    <name type="primary">AKT2</name>
    <name type="synonym">AKT3</name>
    <name type="ordered locus">At4g22200</name>
    <name type="ORF">T10I14.30</name>
</gene>
<sequence>MDLKYSASHCNLSSDMKLRRFHQHRGKGREEEYDASSLSLNNLSKLILPPLGVASYNQNHIRSSGWIISPMDSRYRCWEFYMVLLVAYSAWVYPFEVAFLNSSPKRNLCIADNIVDLFFAVDIVLTFFVAYIDERTQLLVREPKQIAVRYLSTWFLMDVASTIPFDAIGYLITGTSTLNITCNLLGLLRFWRLRRVKHLFTRLEKDIRYSYFWIRCFRLLSVTLFLVHCAGCSYYLIADRYPHQGKTWTDAIPNFTETSLSIRYIAAIYWSITTMTTVGYGDLHASNTIEMVFITVYMLFNLGLTAYLIGNMTNLVVEGTRRTMEFRNSIEAASNFVNRNRLPPRLKDQILAYMCLRFKAESLNQQHLIDQLPKSIYKSICQHLFLPSVEKVYLFKGVSREILLLLVSKMKAEYIPPREDVIMQNEAPDDVYIIVSGEVEIIDSEMERESVLGTLRCGDIFGEVGALCCRPQSYTFQTKSLSQLLRLKTSFLIETMQIKQQDNATMLKNFLQHHKKLSNLDIGDLKAQQNGENTDVVPPNIASNLIAVVTTGNAALLDELLKAKLSPDITDSKGKTPLHVAASRGYEDCVLVLLKHGCNIHIRDVNGNSALWEAIISKHYEIFRILYHFAAISDPHIAGDLLCEAAKQNNVEVMKALLKQGLNVDTEDHHGVTALQVAMAEDQMDMVNLLATNGADVVCVNTHNEFTPLEKLRVVEEEEEEERGRVSIYRGHPLERRERSCNEAGKLILLPPSLDDLKKIAGEKFGFDGSETMVTNEDGAEIDSIEVIRDNDKLYFVVNKII</sequence>
<dbReference type="EMBL" id="U40154">
    <property type="protein sequence ID" value="AAA97865.1"/>
    <property type="molecule type" value="mRNA"/>
</dbReference>
<dbReference type="EMBL" id="U44744">
    <property type="protein sequence ID" value="AAA96153.1"/>
    <property type="status" value="ALT_INIT"/>
    <property type="molecule type" value="Genomic_DNA"/>
</dbReference>
<dbReference type="EMBL" id="U44745">
    <property type="protein sequence ID" value="AAA96154.1"/>
    <property type="status" value="ALT_INIT"/>
    <property type="molecule type" value="mRNA"/>
</dbReference>
<dbReference type="EMBL" id="AL021712">
    <property type="protein sequence ID" value="CAA16770.1"/>
    <property type="status" value="ALT_INIT"/>
    <property type="molecule type" value="Genomic_DNA"/>
</dbReference>
<dbReference type="EMBL" id="AL161556">
    <property type="protein sequence ID" value="CAB79175.1"/>
    <property type="status" value="ALT_INIT"/>
    <property type="molecule type" value="Genomic_DNA"/>
</dbReference>
<dbReference type="EMBL" id="CP002687">
    <property type="protein sequence ID" value="AEE84571.1"/>
    <property type="molecule type" value="Genomic_DNA"/>
</dbReference>
<dbReference type="EMBL" id="AK229735">
    <property type="protein sequence ID" value="BAF01572.1"/>
    <property type="molecule type" value="mRNA"/>
</dbReference>
<dbReference type="PIR" id="S68699">
    <property type="entry name" value="S68699"/>
</dbReference>
<dbReference type="RefSeq" id="NP_567651.1">
    <property type="nucleotide sequence ID" value="NM_118342.3"/>
</dbReference>
<dbReference type="SMR" id="Q38898"/>
<dbReference type="BioGRID" id="13600">
    <property type="interactions" value="14"/>
</dbReference>
<dbReference type="FunCoup" id="Q38898">
    <property type="interactions" value="179"/>
</dbReference>
<dbReference type="IntAct" id="Q38898">
    <property type="interactions" value="10"/>
</dbReference>
<dbReference type="STRING" id="3702.Q38898"/>
<dbReference type="TCDB" id="1.A.1.4.6">
    <property type="family name" value="the voltage-gated ion channel (vic) superfamily"/>
</dbReference>
<dbReference type="GlyCosmos" id="Q38898">
    <property type="glycosylation" value="2 sites, No reported glycans"/>
</dbReference>
<dbReference type="GlyGen" id="Q38898">
    <property type="glycosylation" value="2 sites"/>
</dbReference>
<dbReference type="iPTMnet" id="Q38898"/>
<dbReference type="PaxDb" id="3702-AT4G22200.1"/>
<dbReference type="ProteomicsDB" id="244997"/>
<dbReference type="EnsemblPlants" id="AT4G22200.1">
    <property type="protein sequence ID" value="AT4G22200.1"/>
    <property type="gene ID" value="AT4G22200"/>
</dbReference>
<dbReference type="GeneID" id="828311"/>
<dbReference type="Gramene" id="AT4G22200.1">
    <property type="protein sequence ID" value="AT4G22200.1"/>
    <property type="gene ID" value="AT4G22200"/>
</dbReference>
<dbReference type="KEGG" id="ath:AT4G22200"/>
<dbReference type="Araport" id="AT4G22200"/>
<dbReference type="TAIR" id="AT4G22200">
    <property type="gene designation" value="KT2/3"/>
</dbReference>
<dbReference type="eggNOG" id="KOG0498">
    <property type="taxonomic scope" value="Eukaryota"/>
</dbReference>
<dbReference type="HOGENOM" id="CLU_005746_8_3_1"/>
<dbReference type="InParanoid" id="Q38898"/>
<dbReference type="OrthoDB" id="426293at2759"/>
<dbReference type="PhylomeDB" id="Q38898"/>
<dbReference type="PRO" id="PR:Q38898"/>
<dbReference type="Proteomes" id="UP000006548">
    <property type="component" value="Chromosome 4"/>
</dbReference>
<dbReference type="ExpressionAtlas" id="Q38898">
    <property type="expression patterns" value="baseline and differential"/>
</dbReference>
<dbReference type="GO" id="GO:0005789">
    <property type="term" value="C:endoplasmic reticulum membrane"/>
    <property type="evidence" value="ECO:0000314"/>
    <property type="project" value="UniProtKB"/>
</dbReference>
<dbReference type="GO" id="GO:0034702">
    <property type="term" value="C:monoatomic ion channel complex"/>
    <property type="evidence" value="ECO:0007669"/>
    <property type="project" value="UniProtKB-KW"/>
</dbReference>
<dbReference type="GO" id="GO:0009506">
    <property type="term" value="C:plasmodesma"/>
    <property type="evidence" value="ECO:0007005"/>
    <property type="project" value="TAIR"/>
</dbReference>
<dbReference type="GO" id="GO:0042802">
    <property type="term" value="F:identical protein binding"/>
    <property type="evidence" value="ECO:0000353"/>
    <property type="project" value="IntAct"/>
</dbReference>
<dbReference type="GO" id="GO:0005249">
    <property type="term" value="F:voltage-gated potassium channel activity"/>
    <property type="evidence" value="ECO:0007669"/>
    <property type="project" value="InterPro"/>
</dbReference>
<dbReference type="GO" id="GO:0042391">
    <property type="term" value="P:regulation of membrane potential"/>
    <property type="evidence" value="ECO:0000315"/>
    <property type="project" value="TAIR"/>
</dbReference>
<dbReference type="GO" id="GO:0009737">
    <property type="term" value="P:response to abscisic acid"/>
    <property type="evidence" value="ECO:0000270"/>
    <property type="project" value="TAIR"/>
</dbReference>
<dbReference type="CDD" id="cd00038">
    <property type="entry name" value="CAP_ED"/>
    <property type="match status" value="1"/>
</dbReference>
<dbReference type="FunFam" id="2.60.120.10:FF:000074">
    <property type="entry name" value="Potassium channel KAT2"/>
    <property type="match status" value="1"/>
</dbReference>
<dbReference type="FunFam" id="1.10.287.70:FF:000139">
    <property type="entry name" value="Potassium channel SKOR"/>
    <property type="match status" value="1"/>
</dbReference>
<dbReference type="Gene3D" id="1.10.287.70">
    <property type="match status" value="1"/>
</dbReference>
<dbReference type="Gene3D" id="1.25.40.20">
    <property type="entry name" value="Ankyrin repeat-containing domain"/>
    <property type="match status" value="1"/>
</dbReference>
<dbReference type="Gene3D" id="2.60.120.10">
    <property type="entry name" value="Jelly Rolls"/>
    <property type="match status" value="1"/>
</dbReference>
<dbReference type="InterPro" id="IPR002110">
    <property type="entry name" value="Ankyrin_rpt"/>
</dbReference>
<dbReference type="InterPro" id="IPR036770">
    <property type="entry name" value="Ankyrin_rpt-contain_sf"/>
</dbReference>
<dbReference type="InterPro" id="IPR000595">
    <property type="entry name" value="cNMP-bd_dom"/>
</dbReference>
<dbReference type="InterPro" id="IPR018490">
    <property type="entry name" value="cNMP-bd_dom_sf"/>
</dbReference>
<dbReference type="InterPro" id="IPR005821">
    <property type="entry name" value="Ion_trans_dom"/>
</dbReference>
<dbReference type="InterPro" id="IPR003938">
    <property type="entry name" value="K_chnl_volt-dep_EAG/ELK/ERG"/>
</dbReference>
<dbReference type="InterPro" id="IPR045319">
    <property type="entry name" value="KAT/AKT"/>
</dbReference>
<dbReference type="InterPro" id="IPR021789">
    <property type="entry name" value="KHA_dom"/>
</dbReference>
<dbReference type="InterPro" id="IPR014710">
    <property type="entry name" value="RmlC-like_jellyroll"/>
</dbReference>
<dbReference type="PANTHER" id="PTHR45743">
    <property type="entry name" value="POTASSIUM CHANNEL AKT1"/>
    <property type="match status" value="1"/>
</dbReference>
<dbReference type="PANTHER" id="PTHR45743:SF21">
    <property type="entry name" value="POTASSIUM CHANNEL AKT2_3"/>
    <property type="match status" value="1"/>
</dbReference>
<dbReference type="Pfam" id="PF12796">
    <property type="entry name" value="Ank_2"/>
    <property type="match status" value="2"/>
</dbReference>
<dbReference type="Pfam" id="PF00027">
    <property type="entry name" value="cNMP_binding"/>
    <property type="match status" value="1"/>
</dbReference>
<dbReference type="Pfam" id="PF00520">
    <property type="entry name" value="Ion_trans"/>
    <property type="match status" value="1"/>
</dbReference>
<dbReference type="Pfam" id="PF11834">
    <property type="entry name" value="KHA"/>
    <property type="match status" value="1"/>
</dbReference>
<dbReference type="PRINTS" id="PR01415">
    <property type="entry name" value="ANKYRIN"/>
</dbReference>
<dbReference type="PRINTS" id="PR01463">
    <property type="entry name" value="EAGCHANLFMLY"/>
</dbReference>
<dbReference type="SMART" id="SM00248">
    <property type="entry name" value="ANK"/>
    <property type="match status" value="5"/>
</dbReference>
<dbReference type="SMART" id="SM00100">
    <property type="entry name" value="cNMP"/>
    <property type="match status" value="1"/>
</dbReference>
<dbReference type="SUPFAM" id="SSF48403">
    <property type="entry name" value="Ankyrin repeat"/>
    <property type="match status" value="1"/>
</dbReference>
<dbReference type="SUPFAM" id="SSF51206">
    <property type="entry name" value="cAMP-binding domain-like"/>
    <property type="match status" value="1"/>
</dbReference>
<dbReference type="SUPFAM" id="SSF81324">
    <property type="entry name" value="Voltage-gated potassium channels"/>
    <property type="match status" value="1"/>
</dbReference>
<dbReference type="PROSITE" id="PS50297">
    <property type="entry name" value="ANK_REP_REGION"/>
    <property type="match status" value="1"/>
</dbReference>
<dbReference type="PROSITE" id="PS50088">
    <property type="entry name" value="ANK_REPEAT"/>
    <property type="match status" value="2"/>
</dbReference>
<dbReference type="PROSITE" id="PS50042">
    <property type="entry name" value="CNMP_BINDING_3"/>
    <property type="match status" value="1"/>
</dbReference>
<dbReference type="PROSITE" id="PS51490">
    <property type="entry name" value="KHA"/>
    <property type="match status" value="1"/>
</dbReference>
<reference key="1">
    <citation type="journal article" date="1995" name="Plant Physiol.">
        <title>Multiple genes, tissue specificity, and expression-dependent modulation contribute to the functional diversity of potassium channels in Arabidopsis thaliana.</title>
        <authorList>
            <person name="Cao Y."/>
            <person name="Ward J.M."/>
            <person name="Kelly W.B."/>
            <person name="Ichida A.M."/>
            <person name="Gaber R.F."/>
            <person name="Anderson J.A."/>
            <person name="Uozumi N."/>
            <person name="Schroeder J.I."/>
            <person name="Crawford N.M."/>
        </authorList>
    </citation>
    <scope>NUCLEOTIDE SEQUENCE [MRNA]</scope>
    <scope>TISSUE SPECIFICITY</scope>
    <source>
        <strain>cv. Columbia</strain>
    </source>
</reference>
<reference key="2">
    <citation type="journal article" date="1996" name="FEBS Lett.">
        <title>Isolation of an ion channel gene from Arabidopsis thaliana using the H5 signature sequence from voltage-dependent K+ channels.</title>
        <authorList>
            <person name="Ketchum K.A."/>
            <person name="Slayman C.W."/>
        </authorList>
    </citation>
    <scope>NUCLEOTIDE SEQUENCE [GENOMIC DNA / MRNA]</scope>
</reference>
<reference key="3">
    <citation type="journal article" date="1999" name="Nature">
        <title>Sequence and analysis of chromosome 4 of the plant Arabidopsis thaliana.</title>
        <authorList>
            <person name="Mayer K.F.X."/>
            <person name="Schueller C."/>
            <person name="Wambutt R."/>
            <person name="Murphy G."/>
            <person name="Volckaert G."/>
            <person name="Pohl T."/>
            <person name="Duesterhoeft A."/>
            <person name="Stiekema W."/>
            <person name="Entian K.-D."/>
            <person name="Terryn N."/>
            <person name="Harris B."/>
            <person name="Ansorge W."/>
            <person name="Brandt P."/>
            <person name="Grivell L.A."/>
            <person name="Rieger M."/>
            <person name="Weichselgartner M."/>
            <person name="de Simone V."/>
            <person name="Obermaier B."/>
            <person name="Mache R."/>
            <person name="Mueller M."/>
            <person name="Kreis M."/>
            <person name="Delseny M."/>
            <person name="Puigdomenech P."/>
            <person name="Watson M."/>
            <person name="Schmidtheini T."/>
            <person name="Reichert B."/>
            <person name="Portetelle D."/>
            <person name="Perez-Alonso M."/>
            <person name="Boutry M."/>
            <person name="Bancroft I."/>
            <person name="Vos P."/>
            <person name="Hoheisel J."/>
            <person name="Zimmermann W."/>
            <person name="Wedler H."/>
            <person name="Ridley P."/>
            <person name="Langham S.-A."/>
            <person name="McCullagh B."/>
            <person name="Bilham L."/>
            <person name="Robben J."/>
            <person name="van der Schueren J."/>
            <person name="Grymonprez B."/>
            <person name="Chuang Y.-J."/>
            <person name="Vandenbussche F."/>
            <person name="Braeken M."/>
            <person name="Weltjens I."/>
            <person name="Voet M."/>
            <person name="Bastiaens I."/>
            <person name="Aert R."/>
            <person name="Defoor E."/>
            <person name="Weitzenegger T."/>
            <person name="Bothe G."/>
            <person name="Ramsperger U."/>
            <person name="Hilbert H."/>
            <person name="Braun M."/>
            <person name="Holzer E."/>
            <person name="Brandt A."/>
            <person name="Peters S."/>
            <person name="van Staveren M."/>
            <person name="Dirkse W."/>
            <person name="Mooijman P."/>
            <person name="Klein Lankhorst R."/>
            <person name="Rose M."/>
            <person name="Hauf J."/>
            <person name="Koetter P."/>
            <person name="Berneiser S."/>
            <person name="Hempel S."/>
            <person name="Feldpausch M."/>
            <person name="Lamberth S."/>
            <person name="Van den Daele H."/>
            <person name="De Keyser A."/>
            <person name="Buysshaert C."/>
            <person name="Gielen J."/>
            <person name="Villarroel R."/>
            <person name="De Clercq R."/>
            <person name="van Montagu M."/>
            <person name="Rogers J."/>
            <person name="Cronin A."/>
            <person name="Quail M.A."/>
            <person name="Bray-Allen S."/>
            <person name="Clark L."/>
            <person name="Doggett J."/>
            <person name="Hall S."/>
            <person name="Kay M."/>
            <person name="Lennard N."/>
            <person name="McLay K."/>
            <person name="Mayes R."/>
            <person name="Pettett A."/>
            <person name="Rajandream M.A."/>
            <person name="Lyne M."/>
            <person name="Benes V."/>
            <person name="Rechmann S."/>
            <person name="Borkova D."/>
            <person name="Bloecker H."/>
            <person name="Scharfe M."/>
            <person name="Grimm M."/>
            <person name="Loehnert T.-H."/>
            <person name="Dose S."/>
            <person name="de Haan M."/>
            <person name="Maarse A.C."/>
            <person name="Schaefer M."/>
            <person name="Mueller-Auer S."/>
            <person name="Gabel C."/>
            <person name="Fuchs M."/>
            <person name="Fartmann B."/>
            <person name="Granderath K."/>
            <person name="Dauner D."/>
            <person name="Herzl A."/>
            <person name="Neumann S."/>
            <person name="Argiriou A."/>
            <person name="Vitale D."/>
            <person name="Liguori R."/>
            <person name="Piravandi E."/>
            <person name="Massenet O."/>
            <person name="Quigley F."/>
            <person name="Clabauld G."/>
            <person name="Muendlein A."/>
            <person name="Felber R."/>
            <person name="Schnabl S."/>
            <person name="Hiller R."/>
            <person name="Schmidt W."/>
            <person name="Lecharny A."/>
            <person name="Aubourg S."/>
            <person name="Chefdor F."/>
            <person name="Cooke R."/>
            <person name="Berger C."/>
            <person name="Monfort A."/>
            <person name="Casacuberta E."/>
            <person name="Gibbons T."/>
            <person name="Weber N."/>
            <person name="Vandenbol M."/>
            <person name="Bargues M."/>
            <person name="Terol J."/>
            <person name="Torres A."/>
            <person name="Perez-Perez A."/>
            <person name="Purnelle B."/>
            <person name="Bent E."/>
            <person name="Johnson S."/>
            <person name="Tacon D."/>
            <person name="Jesse T."/>
            <person name="Heijnen L."/>
            <person name="Schwarz S."/>
            <person name="Scholler P."/>
            <person name="Heber S."/>
            <person name="Francs P."/>
            <person name="Bielke C."/>
            <person name="Frishman D."/>
            <person name="Haase D."/>
            <person name="Lemcke K."/>
            <person name="Mewes H.-W."/>
            <person name="Stocker S."/>
            <person name="Zaccaria P."/>
            <person name="Bevan M."/>
            <person name="Wilson R.K."/>
            <person name="de la Bastide M."/>
            <person name="Habermann K."/>
            <person name="Parnell L."/>
            <person name="Dedhia N."/>
            <person name="Gnoj L."/>
            <person name="Schutz K."/>
            <person name="Huang E."/>
            <person name="Spiegel L."/>
            <person name="Sekhon M."/>
            <person name="Murray J."/>
            <person name="Sheet P."/>
            <person name="Cordes M."/>
            <person name="Abu-Threideh J."/>
            <person name="Stoneking T."/>
            <person name="Kalicki J."/>
            <person name="Graves T."/>
            <person name="Harmon G."/>
            <person name="Edwards J."/>
            <person name="Latreille P."/>
            <person name="Courtney L."/>
            <person name="Cloud J."/>
            <person name="Abbott A."/>
            <person name="Scott K."/>
            <person name="Johnson D."/>
            <person name="Minx P."/>
            <person name="Bentley D."/>
            <person name="Fulton B."/>
            <person name="Miller N."/>
            <person name="Greco T."/>
            <person name="Kemp K."/>
            <person name="Kramer J."/>
            <person name="Fulton L."/>
            <person name="Mardis E."/>
            <person name="Dante M."/>
            <person name="Pepin K."/>
            <person name="Hillier L.W."/>
            <person name="Nelson J."/>
            <person name="Spieth J."/>
            <person name="Ryan E."/>
            <person name="Andrews S."/>
            <person name="Geisel C."/>
            <person name="Layman D."/>
            <person name="Du H."/>
            <person name="Ali J."/>
            <person name="Berghoff A."/>
            <person name="Jones K."/>
            <person name="Drone K."/>
            <person name="Cotton M."/>
            <person name="Joshu C."/>
            <person name="Antonoiu B."/>
            <person name="Zidanic M."/>
            <person name="Strong C."/>
            <person name="Sun H."/>
            <person name="Lamar B."/>
            <person name="Yordan C."/>
            <person name="Ma P."/>
            <person name="Zhong J."/>
            <person name="Preston R."/>
            <person name="Vil D."/>
            <person name="Shekher M."/>
            <person name="Matero A."/>
            <person name="Shah R."/>
            <person name="Swaby I.K."/>
            <person name="O'Shaughnessy A."/>
            <person name="Rodriguez M."/>
            <person name="Hoffman J."/>
            <person name="Till S."/>
            <person name="Granat S."/>
            <person name="Shohdy N."/>
            <person name="Hasegawa A."/>
            <person name="Hameed A."/>
            <person name="Lodhi M."/>
            <person name="Johnson A."/>
            <person name="Chen E."/>
            <person name="Marra M.A."/>
            <person name="Martienssen R."/>
            <person name="McCombie W.R."/>
        </authorList>
    </citation>
    <scope>NUCLEOTIDE SEQUENCE [LARGE SCALE GENOMIC DNA]</scope>
    <source>
        <strain>cv. Columbia</strain>
    </source>
</reference>
<reference key="4">
    <citation type="journal article" date="2017" name="Plant J.">
        <title>Araport11: a complete reannotation of the Arabidopsis thaliana reference genome.</title>
        <authorList>
            <person name="Cheng C.Y."/>
            <person name="Krishnakumar V."/>
            <person name="Chan A.P."/>
            <person name="Thibaud-Nissen F."/>
            <person name="Schobel S."/>
            <person name="Town C.D."/>
        </authorList>
    </citation>
    <scope>GENOME REANNOTATION</scope>
    <source>
        <strain>cv. Columbia</strain>
    </source>
</reference>
<reference key="5">
    <citation type="submission" date="2006-07" db="EMBL/GenBank/DDBJ databases">
        <title>Large-scale analysis of RIKEN Arabidopsis full-length (RAFL) cDNAs.</title>
        <authorList>
            <person name="Totoki Y."/>
            <person name="Seki M."/>
            <person name="Ishida J."/>
            <person name="Nakajima M."/>
            <person name="Enju A."/>
            <person name="Kamiya A."/>
            <person name="Narusaka M."/>
            <person name="Shin-i T."/>
            <person name="Nakagawa M."/>
            <person name="Sakamoto N."/>
            <person name="Oishi K."/>
            <person name="Kohara Y."/>
            <person name="Kobayashi M."/>
            <person name="Toyoda A."/>
            <person name="Sakaki Y."/>
            <person name="Sakurai T."/>
            <person name="Iida K."/>
            <person name="Akiyama K."/>
            <person name="Satou M."/>
            <person name="Toyoda T."/>
            <person name="Konagaya A."/>
            <person name="Carninci P."/>
            <person name="Kawai J."/>
            <person name="Hayashizaki Y."/>
            <person name="Shinozaki K."/>
        </authorList>
    </citation>
    <scope>NUCLEOTIDE SEQUENCE [LARGE SCALE MRNA]</scope>
    <source>
        <strain>cv. Columbia</strain>
    </source>
</reference>
<reference key="6">
    <citation type="journal article" date="1999" name="Proc. Natl. Acad. Sci. U.S.A.">
        <title>AKT3, a phloem-localized K+ channel, is blocked by protons.</title>
        <authorList>
            <person name="Marten I."/>
            <person name="Hoth S."/>
            <person name="Deeken R."/>
            <person name="Ache P."/>
            <person name="Ketchum K.A."/>
            <person name="Hoshi T."/>
            <person name="Hedrich R."/>
        </authorList>
    </citation>
    <scope>CHARACTERIZATION</scope>
    <scope>TISSUE SPECIFICITY</scope>
</reference>
<reference key="7">
    <citation type="journal article" date="1999" name="J. Membr. Biol.">
        <title>Suppression of inward-rectifying K+ channels KAT1 and AKT2 by dominant negative point mutations in the KAT1 alpha-subunit.</title>
        <authorList>
            <person name="Baizabal-Aguirre V.M."/>
            <person name="Clemens S."/>
            <person name="Uozumi N."/>
            <person name="Schroeder J.I."/>
        </authorList>
    </citation>
    <scope>INTERACTION WITH KAT1</scope>
</reference>
<reference key="8">
    <citation type="journal article" date="2000" name="Plant Cell">
        <title>A shaker-like K(+) channel with weak rectification is expressed in both source and sink phloem tissues of Arabidopsis.</title>
        <authorList>
            <person name="Lacombe B."/>
            <person name="Pilot G."/>
            <person name="Michard E."/>
            <person name="Gaymard F."/>
            <person name="Sentenac H."/>
            <person name="Thibaud J.-B."/>
        </authorList>
    </citation>
    <scope>CHARACTERIZATION</scope>
    <scope>TISSUE SPECIFICITY</scope>
</reference>
<reference key="9">
    <citation type="journal article" date="2001" name="J. Exp. Bot.">
        <title>The AKT3 potassium channel protein interacts with the AtPP2CA protein phosphatase 2C.</title>
        <authorList>
            <person name="Vranova E."/>
            <person name="Taehtiharju S."/>
            <person name="Sriprang R."/>
            <person name="Willekens H."/>
            <person name="Heino P."/>
            <person name="Palva E.T."/>
            <person name="Inze D."/>
            <person name="Van Camp W."/>
        </authorList>
    </citation>
    <scope>INTERACTION WITH PP2CA</scope>
</reference>
<reference key="10">
    <citation type="journal article" date="2001" name="Plant Physiol.">
        <title>Phylogenetic relationships within cation transporter families of Arabidopsis.</title>
        <authorList>
            <person name="Maeser P."/>
            <person name="Thomine S."/>
            <person name="Schroeder J.I."/>
            <person name="Ward J.M."/>
            <person name="Hirschi K."/>
            <person name="Sze H."/>
            <person name="Talke I.N."/>
            <person name="Amtmann A."/>
            <person name="Maathuis F.J.M."/>
            <person name="Sanders D."/>
            <person name="Harper J.F."/>
            <person name="Tchieu J."/>
            <person name="Gribskov M."/>
            <person name="Persans M.W."/>
            <person name="Salt D.E."/>
            <person name="Kim S.A."/>
            <person name="Guerinot M.L."/>
        </authorList>
    </citation>
    <scope>GENE FAMILY</scope>
    <scope>NOMENCLATURE</scope>
</reference>
<reference key="11">
    <citation type="journal article" date="2002" name="Planta">
        <title>Loss of the AKT2/3 potassium channel affects sugar loading into the phloem of Arabidopsis.</title>
        <authorList>
            <person name="Deeken R."/>
            <person name="Geiger D."/>
            <person name="Fromm J."/>
            <person name="Koroleva O."/>
            <person name="Ache P."/>
            <person name="Langenfeld-Heyser R."/>
            <person name="Sauer N."/>
            <person name="May S.T."/>
            <person name="Hedrich R."/>
        </authorList>
    </citation>
    <scope>FUNCTION</scope>
</reference>
<reference key="12">
    <citation type="journal article" date="2002" name="Plant Cell">
        <title>Physical and functional interaction of the Arabidopsis K(+) channel AKT2 and phosphatase AtPP2CA.</title>
        <authorList>
            <person name="Cherel I."/>
            <person name="Michard E."/>
            <person name="Platet N."/>
            <person name="Mouline K."/>
            <person name="Alcon C."/>
            <person name="Sentenac H."/>
            <person name="Thibaud J.-B."/>
        </authorList>
    </citation>
    <scope>INTERACTION WITH PP2CA</scope>
    <scope>DEPHOSPHORYLATION BY PP2CA</scope>
    <scope>TISSUE SPECIFICITY</scope>
</reference>
<reference key="13">
    <citation type="journal article" date="2002" name="Plant Cell">
        <title>Outer pore residues control the H(+) and K(+) sensitivity of the Arabidopsis potassium channel AKT3.</title>
        <authorList>
            <person name="Geiger D."/>
            <person name="Becker D."/>
            <person name="Lacombe B."/>
            <person name="Hedrich R."/>
        </authorList>
    </citation>
    <scope>MUTAGENESIS OF HIS-243; SER-286 AND ILE-289</scope>
</reference>
<reference key="14">
    <citation type="journal article" date="2003" name="Plant Mol. Biol.">
        <title>Regulated expression of Arabidopsis shaker K(+) channel genes involved in K(+) uptake and distribution in the plant.</title>
        <authorList>
            <person name="Pilot G."/>
            <person name="Gaymard F."/>
            <person name="Mouline K."/>
            <person name="Cherel I."/>
            <person name="Sentenac H."/>
        </authorList>
    </citation>
    <scope>FUNCTION</scope>
    <scope>INTERACTION WITH AKT1 AND KAT3</scope>
    <scope>INDUCTION</scope>
</reference>
<reference key="15">
    <citation type="journal article" date="2011" name="Cell Res.">
        <title>Calcium-dependent modulation and plasma membrane targeting of the AKT2 potassium channel by the CBL4/CIPK6 calcium sensor/protein kinase complex.</title>
        <authorList>
            <person name="Held K."/>
            <person name="Pascaud F."/>
            <person name="Eckert C."/>
            <person name="Gajdanowicz P."/>
            <person name="Hashimoto K."/>
            <person name="Corratge-Faillie C."/>
            <person name="Offenborn J.N."/>
            <person name="Lacombe B."/>
            <person name="Dreyer I."/>
            <person name="Thibaud J.B."/>
            <person name="Kudla J."/>
        </authorList>
    </citation>
    <scope>SUBCELLULAR LOCATION</scope>
    <scope>INTERACTION WITH CIPK6</scope>
    <scope>DISRUPTION PHENOTYPE</scope>
</reference>
<reference key="16">
    <citation type="journal article" date="2016" name="Plant Cell">
        <title>S-type anion channels SLAC1 and SLAH3 function as essential negative regulators of inward K+ channels and stomatal opening in Arabidopsis.</title>
        <authorList>
            <person name="Zhang A."/>
            <person name="Ren H.M."/>
            <person name="Tan Y.Q."/>
            <person name="Qi G.N."/>
            <person name="Yao F.Y."/>
            <person name="Wu G.L."/>
            <person name="Yang L.W."/>
            <person name="Hussain J."/>
            <person name="Sun S.J."/>
            <person name="Wang Y.F."/>
        </authorList>
    </citation>
    <scope>INTERACTION WITH SLAC1</scope>
</reference>
<proteinExistence type="evidence at protein level"/>
<feature type="chain" id="PRO_0000054122" description="Potassium channel AKT2/3">
    <location>
        <begin position="1"/>
        <end position="802"/>
    </location>
</feature>
<feature type="topological domain" description="Cytoplasmic" evidence="1">
    <location>
        <begin position="1"/>
        <end position="79"/>
    </location>
</feature>
<feature type="transmembrane region" description="Helical; Name=Segment S1" evidence="1">
    <location>
        <begin position="80"/>
        <end position="100"/>
    </location>
</feature>
<feature type="topological domain" description="Extracellular" evidence="1">
    <location>
        <begin position="101"/>
        <end position="109"/>
    </location>
</feature>
<feature type="transmembrane region" description="Helical; Name=Segment S2" evidence="1">
    <location>
        <begin position="110"/>
        <end position="130"/>
    </location>
</feature>
<feature type="topological domain" description="Cytoplasmic" evidence="1">
    <location>
        <begin position="131"/>
        <end position="153"/>
    </location>
</feature>
<feature type="transmembrane region" description="Helical; Name=Segment S3" evidence="1">
    <location>
        <begin position="154"/>
        <end position="174"/>
    </location>
</feature>
<feature type="topological domain" description="Extracellular" evidence="1">
    <location>
        <begin position="175"/>
        <end position="183"/>
    </location>
</feature>
<feature type="transmembrane region" description="Helical; Voltage-sensor; Name=Segment S4" evidence="1">
    <location>
        <begin position="184"/>
        <end position="204"/>
    </location>
</feature>
<feature type="topological domain" description="Cytoplasmic" evidence="1">
    <location>
        <begin position="205"/>
        <end position="218"/>
    </location>
</feature>
<feature type="transmembrane region" description="Helical; Name=Segment S5" evidence="1">
    <location>
        <begin position="219"/>
        <end position="239"/>
    </location>
</feature>
<feature type="topological domain" description="Extracellular" evidence="1">
    <location>
        <begin position="240"/>
        <end position="265"/>
    </location>
</feature>
<feature type="intramembrane region" description="Pore-forming; Name=Segment H5" evidence="1">
    <location>
        <begin position="266"/>
        <end position="285"/>
    </location>
</feature>
<feature type="topological domain" description="Extracellular" evidence="1">
    <location>
        <begin position="286"/>
        <end position="288"/>
    </location>
</feature>
<feature type="transmembrane region" description="Helical; Name=Segment S6" evidence="1">
    <location>
        <begin position="289"/>
        <end position="309"/>
    </location>
</feature>
<feature type="topological domain" description="Cytoplasmic" evidence="1">
    <location>
        <begin position="310"/>
        <end position="802"/>
    </location>
</feature>
<feature type="repeat" description="ANK 1">
    <location>
        <begin position="540"/>
        <end position="569"/>
    </location>
</feature>
<feature type="repeat" description="ANK 2">
    <location>
        <begin position="573"/>
        <end position="602"/>
    </location>
</feature>
<feature type="repeat" description="ANK 3">
    <location>
        <begin position="606"/>
        <end position="636"/>
    </location>
</feature>
<feature type="repeat" description="ANK 4">
    <location>
        <begin position="637"/>
        <end position="666"/>
    </location>
</feature>
<feature type="repeat" description="ANK 5">
    <location>
        <begin position="670"/>
        <end position="699"/>
    </location>
</feature>
<feature type="domain" description="KHA" evidence="2">
    <location>
        <begin position="725"/>
        <end position="802"/>
    </location>
</feature>
<feature type="binding site">
    <location>
        <begin position="394"/>
        <end position="513"/>
    </location>
    <ligand>
        <name>a nucleoside 3',5'-cyclic phosphate</name>
        <dbReference type="ChEBI" id="CHEBI:58464"/>
    </ligand>
</feature>
<feature type="glycosylation site" description="N-linked (GlcNAc...) asparagine" evidence="1">
    <location>
        <position position="179"/>
    </location>
</feature>
<feature type="glycosylation site" description="N-linked (GlcNAc...) asparagine" evidence="1">
    <location>
        <position position="254"/>
    </location>
</feature>
<feature type="mutagenesis site" description="Abolishes the proton sensitivity; lack of susceptibility to extracellular potassium; when associated with E-286." evidence="7">
    <original>H</original>
    <variation>D</variation>
    <location>
        <position position="243"/>
    </location>
</feature>
<feature type="mutagenesis site" description="Abolishes the proton and the potassium sensitivity; lack of susceptibility to extracellular potassium; when associated with D-243." evidence="7">
    <original>S</original>
    <variation>E</variation>
    <location>
        <position position="286"/>
    </location>
</feature>
<feature type="mutagenesis site" description="No change in proton sensitivity." evidence="7">
    <original>I</original>
    <variation>R</variation>
    <location>
        <position position="289"/>
    </location>
</feature>
<accession>Q38898</accession>
<accession>Q0WMS8</accession>
<accession>Q42408</accession>
<accession>Q9M0L6</accession>
<name>AKT2_ARATH</name>